<comment type="function">
    <text evidence="3">Catalyzes the synthesis of the phenylpropene isoeugenol from coniferyl acetate (PubMed:18208524). Phenylpropenes are the primary constituents of various essential plant oils (PubMed:18208524). They are produced as antimicrobial and antianimal compounds, or as floral attractants of pollinators (PubMed:18208524). Isoeugenol is a characteristic aromatic constituent of spices and a floral volatile compound (PubMed:18208524).</text>
</comment>
<comment type="catalytic activity">
    <reaction evidence="3">
        <text>(E)-isoeugenol + acetate + NADP(+) = (E)-coniferyl acetate + NADPH</text>
        <dbReference type="Rhea" id="RHEA:24694"/>
        <dbReference type="ChEBI" id="CHEBI:30089"/>
        <dbReference type="ChEBI" id="CHEBI:47905"/>
        <dbReference type="ChEBI" id="CHEBI:50545"/>
        <dbReference type="ChEBI" id="CHEBI:57783"/>
        <dbReference type="ChEBI" id="CHEBI:58349"/>
        <dbReference type="EC" id="1.1.1.319"/>
    </reaction>
    <physiologicalReaction direction="right-to-left" evidence="3">
        <dbReference type="Rhea" id="RHEA:24696"/>
    </physiologicalReaction>
</comment>
<comment type="biophysicochemical properties">
    <kinetics>
        <KM evidence="3">211.5 uM for coniferyl acetate</KM>
        <Vmax evidence="3">27.6 nmol/sec/mg enzyme with coniferyl acetate as substrate</Vmax>
        <text evidence="3">kcat is 0.99 sec(-1) with coniferyl acetate as substrate.</text>
    </kinetics>
</comment>
<comment type="pathway">
    <text evidence="3">Aromatic compound metabolism; phenylpropanoid biosynthesis.</text>
</comment>
<comment type="tissue specificity">
    <text evidence="3">Mostly expressed in petals, and, to a lower extent, in sepals, stamens and pistils.</text>
</comment>
<comment type="similarity">
    <text evidence="5">Belongs to the NmrA-type oxidoreductase family.</text>
</comment>
<keyword id="KW-0521">NADP</keyword>
<keyword id="KW-0547">Nucleotide-binding</keyword>
<keyword id="KW-0560">Oxidoreductase</keyword>
<keyword id="KW-0587">Phenylpropanoid metabolism</keyword>
<organism>
    <name type="scientific">Clarkia breweri</name>
    <name type="common">Fairy fans</name>
    <name type="synonym">Eucharidium breweri</name>
    <dbReference type="NCBI Taxonomy" id="36903"/>
    <lineage>
        <taxon>Eukaryota</taxon>
        <taxon>Viridiplantae</taxon>
        <taxon>Streptophyta</taxon>
        <taxon>Embryophyta</taxon>
        <taxon>Tracheophyta</taxon>
        <taxon>Spermatophyta</taxon>
        <taxon>Magnoliopsida</taxon>
        <taxon>eudicotyledons</taxon>
        <taxon>Gunneridae</taxon>
        <taxon>Pentapetalae</taxon>
        <taxon>rosids</taxon>
        <taxon>malvids</taxon>
        <taxon>Myrtales</taxon>
        <taxon>Onagraceae</taxon>
        <taxon>Onagroideae</taxon>
        <taxon>Onagreae</taxon>
        <taxon>Clarkia</taxon>
    </lineage>
</organism>
<dbReference type="EC" id="1.1.1.319"/>
<dbReference type="EMBL" id="EF467238">
    <property type="protein sequence ID" value="ABR24112.1"/>
    <property type="molecule type" value="mRNA"/>
</dbReference>
<dbReference type="SMR" id="B2WSM8"/>
<dbReference type="BioCyc" id="MetaCyc:MONOMER-13837"/>
<dbReference type="UniPathway" id="UPA00711"/>
<dbReference type="GO" id="GO:0000166">
    <property type="term" value="F:nucleotide binding"/>
    <property type="evidence" value="ECO:0007669"/>
    <property type="project" value="UniProtKB-KW"/>
</dbReference>
<dbReference type="GO" id="GO:0016491">
    <property type="term" value="F:oxidoreductase activity"/>
    <property type="evidence" value="ECO:0007669"/>
    <property type="project" value="UniProtKB-KW"/>
</dbReference>
<dbReference type="GO" id="GO:0009699">
    <property type="term" value="P:phenylpropanoid biosynthetic process"/>
    <property type="evidence" value="ECO:0007669"/>
    <property type="project" value="UniProtKB-UniPathway"/>
</dbReference>
<dbReference type="CDD" id="cd05259">
    <property type="entry name" value="PCBER_SDR_a"/>
    <property type="match status" value="1"/>
</dbReference>
<dbReference type="Gene3D" id="3.40.50.720">
    <property type="entry name" value="NAD(P)-binding Rossmann-like Domain"/>
    <property type="match status" value="1"/>
</dbReference>
<dbReference type="Gene3D" id="3.90.25.10">
    <property type="entry name" value="UDP-galactose 4-epimerase, domain 1"/>
    <property type="match status" value="1"/>
</dbReference>
<dbReference type="InterPro" id="IPR036291">
    <property type="entry name" value="NAD(P)-bd_dom_sf"/>
</dbReference>
<dbReference type="InterPro" id="IPR008030">
    <property type="entry name" value="NmrA-like"/>
</dbReference>
<dbReference type="InterPro" id="IPR050608">
    <property type="entry name" value="NmrA-type/Isoflavone_red_sf"/>
</dbReference>
<dbReference type="InterPro" id="IPR045312">
    <property type="entry name" value="PCBER-like"/>
</dbReference>
<dbReference type="PANTHER" id="PTHR43349:SF9">
    <property type="entry name" value="PHENYLCOUMARAN BENZYLIC ETHER REDUCTASE-LIKE PROTEIN"/>
    <property type="match status" value="1"/>
</dbReference>
<dbReference type="PANTHER" id="PTHR43349">
    <property type="entry name" value="PINORESINOL REDUCTASE-RELATED"/>
    <property type="match status" value="1"/>
</dbReference>
<dbReference type="Pfam" id="PF05368">
    <property type="entry name" value="NmrA"/>
    <property type="match status" value="1"/>
</dbReference>
<dbReference type="SUPFAM" id="SSF51735">
    <property type="entry name" value="NAD(P)-binding Rossmann-fold domains"/>
    <property type="match status" value="1"/>
</dbReference>
<gene>
    <name evidence="4" type="primary">IGS1</name>
</gene>
<evidence type="ECO:0000250" key="1">
    <source>
        <dbReference type="UniProtKB" id="D0VWT0"/>
    </source>
</evidence>
<evidence type="ECO:0000250" key="2">
    <source>
        <dbReference type="UniProtKB" id="Q15GI4"/>
    </source>
</evidence>
<evidence type="ECO:0000269" key="3">
    <source>
    </source>
</evidence>
<evidence type="ECO:0000303" key="4">
    <source>
    </source>
</evidence>
<evidence type="ECO:0000305" key="5"/>
<reference key="1">
    <citation type="journal article" date="2008" name="Plant J.">
        <title>The multiple phenylpropene synthases in both Clarkia breweri and Petunia hybrida represent two distinct protein lineages.</title>
        <authorList>
            <person name="Koeduka T."/>
            <person name="Louie G.V."/>
            <person name="Orlova I."/>
            <person name="Kish C.M."/>
            <person name="Ibdah M."/>
            <person name="Wilkerson C.G."/>
            <person name="Bowman M.E."/>
            <person name="Baiga T.J."/>
            <person name="Noel J.P."/>
            <person name="Dudareva N."/>
            <person name="Pichersky E."/>
        </authorList>
    </citation>
    <scope>NUCLEOTIDE SEQUENCE [MRNA]</scope>
    <scope>FUNCTION</scope>
    <scope>MUTAGENESIS OF SER-83; VAL-84; TYR-87 AND PRO-88</scope>
    <scope>TISSUE SPECIFICITY</scope>
    <scope>CATALYTIC ACTIVITY</scope>
    <scope>PATHWAY</scope>
    <scope>BIOPHYSICOCHEMICAL PROPERTIES</scope>
    <scope>GENE FAMILY</scope>
    <scope>NOMENCLATURE</scope>
</reference>
<sequence>MEKIIIYGGTGYIGKFMVRASLSFSHPTFIYARPLTPDSTPSSVQLREEFRSMGVTIIEGEMEEHEKMVSVLRQVDVVISALSVPMYPSQLLIIDAIKAAGNIKRFLPSEFGSEEDRIKPLPPFESVLEKKRIIRRAIEAAELPYTYVSANCFGAYFVNYLLHPSPHPNRDDDIVIYGTGETKFVLNYEEDIAKYTIKVACDPRCCNRIVIYRPPKNIISQNELISLWEAKSGLSFKKVHMPDEQLVRLSQELPQPQNIPVSILHSIFVKGDLMSYEMRKDDIEASNLYPELEFTSIDGLLDLFISGRAPPPTLAEFE</sequence>
<protein>
    <recommendedName>
        <fullName evidence="4">Isoeugenol synthase 1</fullName>
        <shortName evidence="4">CbIGS1</shortName>
        <ecNumber>1.1.1.319</ecNumber>
    </recommendedName>
</protein>
<name>IGS1_CLABR</name>
<proteinExistence type="evidence at protein level"/>
<feature type="chain" id="PRO_0000451501" description="Isoeugenol synthase 1">
    <location>
        <begin position="1"/>
        <end position="318"/>
    </location>
</feature>
<feature type="active site" description="Proton donor/acceptor" evidence="2">
    <location>
        <position position="131"/>
    </location>
</feature>
<feature type="binding site" evidence="1">
    <location>
        <begin position="10"/>
        <end position="13"/>
    </location>
    <ligand>
        <name>NADP(+)</name>
        <dbReference type="ChEBI" id="CHEBI:58349"/>
    </ligand>
</feature>
<feature type="binding site" evidence="2">
    <location>
        <begin position="32"/>
        <end position="43"/>
    </location>
    <ligand>
        <name>NADP(+)</name>
        <dbReference type="ChEBI" id="CHEBI:58349"/>
    </ligand>
</feature>
<feature type="binding site" evidence="1">
    <location>
        <position position="33"/>
    </location>
    <ligand>
        <name>NADP(+)</name>
        <dbReference type="ChEBI" id="CHEBI:58349"/>
    </ligand>
</feature>
<feature type="binding site" evidence="2">
    <location>
        <begin position="84"/>
        <end position="86"/>
    </location>
    <ligand>
        <name>NADP(+)</name>
        <dbReference type="ChEBI" id="CHEBI:58349"/>
    </ligand>
</feature>
<feature type="binding site" evidence="1">
    <location>
        <begin position="109"/>
        <end position="111"/>
    </location>
    <ligand>
        <name>NADP(+)</name>
        <dbReference type="ChEBI" id="CHEBI:58349"/>
    </ligand>
</feature>
<feature type="binding site" evidence="1">
    <location>
        <position position="131"/>
    </location>
    <ligand>
        <name>NADP(+)</name>
        <dbReference type="ChEBI" id="CHEBI:58349"/>
    </ligand>
</feature>
<feature type="binding site" evidence="1">
    <location>
        <begin position="151"/>
        <end position="153"/>
    </location>
    <ligand>
        <name>NADP(+)</name>
        <dbReference type="ChEBI" id="CHEBI:58349"/>
    </ligand>
</feature>
<feature type="binding site" evidence="2">
    <location>
        <position position="260"/>
    </location>
    <ligand>
        <name>substrate</name>
    </ligand>
</feature>
<feature type="site" description="Confers substrate specificity" evidence="3">
    <location>
        <position position="84"/>
    </location>
</feature>
<feature type="site" description="Confers substrate specificity" evidence="3">
    <location>
        <position position="87"/>
    </location>
</feature>
<feature type="site" description="Required for activity" evidence="2">
    <location>
        <position position="263"/>
    </location>
</feature>
<feature type="mutagenesis site" description="Confers some eugenol synthase activity; when associated with F-84. High eugenol synthase activity; when associated with F-84, I-87 and S-88." evidence="3">
    <original>S</original>
    <variation>P</variation>
    <location>
        <position position="83"/>
    </location>
</feature>
<feature type="mutagenesis site" description="Confers some eugenol synthase activity. Confers some eugenol synthase activity; when associated with P-83. Confers eugenol synthase activity; when associated with I-87. High eugenol synthase activity; when associated with S-83, I-87 and S-88." evidence="3">
    <original>V</original>
    <variation>F</variation>
    <location>
        <position position="84"/>
    </location>
</feature>
<feature type="mutagenesis site" description="Confers some eugenol synthase activity. Confers some eugenol synthase activity; when associated with S-88. Confers eugenol synthase activity; when associated with F-84. High eugenol synthase activity; when associated with S-83, F-84 and S-88." evidence="3">
    <original>Y</original>
    <variation>I</variation>
    <location>
        <position position="87"/>
    </location>
</feature>
<feature type="mutagenesis site" description="Confers eugenol synthase activity; when associated with I-87. High eugenol synthase activity; when associated with S-83, F-84 and I-87." evidence="3">
    <original>P</original>
    <variation>S</variation>
    <location>
        <position position="88"/>
    </location>
</feature>
<accession>B2WSM8</accession>